<organism>
    <name type="scientific">Exiguobacterium sibiricum (strain DSM 17290 / CCUG 55495 / CIP 109462 / JCM 13490 / 255-15)</name>
    <dbReference type="NCBI Taxonomy" id="262543"/>
    <lineage>
        <taxon>Bacteria</taxon>
        <taxon>Bacillati</taxon>
        <taxon>Bacillota</taxon>
        <taxon>Bacilli</taxon>
        <taxon>Bacillales</taxon>
        <taxon>Bacillales Family XII. Incertae Sedis</taxon>
        <taxon>Exiguobacterium</taxon>
    </lineage>
</organism>
<evidence type="ECO:0000255" key="1">
    <source>
        <dbReference type="HAMAP-Rule" id="MF_00017"/>
    </source>
</evidence>
<sequence>MQYPEAISRLIESFTKLPGIGPKTAVRLAFHVLDMEEDDVLMFGKALVSAKRDISYCSICGNITDKDPCYVCSDKHRNRTIVCVVQDSRDVIAMEKMRDYQGLYHVLHGAISPMEGIGPEDINVSSLLTRLQADEAITEIILATNPNIEGEATAMYLSRLLKPTGIRVTRIAHGLPVGGDLEYADEVTLSRAMEGRREL</sequence>
<reference key="1">
    <citation type="submission" date="2008-04" db="EMBL/GenBank/DDBJ databases">
        <title>Complete sequence of chromosome of Exiguobacterium sibiricum 255-15.</title>
        <authorList>
            <consortium name="US DOE Joint Genome Institute"/>
            <person name="Copeland A."/>
            <person name="Lucas S."/>
            <person name="Lapidus A."/>
            <person name="Glavina del Rio T."/>
            <person name="Dalin E."/>
            <person name="Tice H."/>
            <person name="Bruce D."/>
            <person name="Goodwin L."/>
            <person name="Pitluck S."/>
            <person name="Kiss H."/>
            <person name="Chertkov O."/>
            <person name="Monk C."/>
            <person name="Brettin T."/>
            <person name="Detter J.C."/>
            <person name="Han C."/>
            <person name="Kuske C.R."/>
            <person name="Schmutz J."/>
            <person name="Larimer F."/>
            <person name="Land M."/>
            <person name="Hauser L."/>
            <person name="Kyrpides N."/>
            <person name="Mikhailova N."/>
            <person name="Vishnivetskaya T."/>
            <person name="Rodrigues D.F."/>
            <person name="Gilichinsky D."/>
            <person name="Tiedje J."/>
            <person name="Richardson P."/>
        </authorList>
    </citation>
    <scope>NUCLEOTIDE SEQUENCE [LARGE SCALE GENOMIC DNA]</scope>
    <source>
        <strain>DSM 17290 / CCUG 55495 / CIP 109462 / JCM 13490 / 255-15</strain>
    </source>
</reference>
<keyword id="KW-0227">DNA damage</keyword>
<keyword id="KW-0233">DNA recombination</keyword>
<keyword id="KW-0234">DNA repair</keyword>
<keyword id="KW-0479">Metal-binding</keyword>
<keyword id="KW-1185">Reference proteome</keyword>
<keyword id="KW-0862">Zinc</keyword>
<keyword id="KW-0863">Zinc-finger</keyword>
<comment type="function">
    <text evidence="1">May play a role in DNA repair. It seems to be involved in an RecBC-independent recombinational process of DNA repair. It may act with RecF and RecO.</text>
</comment>
<comment type="similarity">
    <text evidence="1">Belongs to the RecR family.</text>
</comment>
<name>RECR_EXIS2</name>
<feature type="chain" id="PRO_1000089729" description="Recombination protein RecR">
    <location>
        <begin position="1"/>
        <end position="199"/>
    </location>
</feature>
<feature type="domain" description="Toprim" evidence="1">
    <location>
        <begin position="80"/>
        <end position="176"/>
    </location>
</feature>
<feature type="zinc finger region" description="C4-type" evidence="1">
    <location>
        <begin position="57"/>
        <end position="72"/>
    </location>
</feature>
<protein>
    <recommendedName>
        <fullName evidence="1">Recombination protein RecR</fullName>
    </recommendedName>
</protein>
<gene>
    <name evidence="1" type="primary">recR</name>
    <name type="ordered locus">Exig_0020</name>
</gene>
<dbReference type="EMBL" id="CP001022">
    <property type="protein sequence ID" value="ACB59507.1"/>
    <property type="molecule type" value="Genomic_DNA"/>
</dbReference>
<dbReference type="RefSeq" id="WP_012368933.1">
    <property type="nucleotide sequence ID" value="NC_010556.1"/>
</dbReference>
<dbReference type="SMR" id="B1YGD0"/>
<dbReference type="STRING" id="262543.Exig_0020"/>
<dbReference type="KEGG" id="esi:Exig_0020"/>
<dbReference type="eggNOG" id="COG0353">
    <property type="taxonomic scope" value="Bacteria"/>
</dbReference>
<dbReference type="HOGENOM" id="CLU_060739_1_0_9"/>
<dbReference type="OrthoDB" id="9802672at2"/>
<dbReference type="Proteomes" id="UP000001681">
    <property type="component" value="Chromosome"/>
</dbReference>
<dbReference type="GO" id="GO:0003677">
    <property type="term" value="F:DNA binding"/>
    <property type="evidence" value="ECO:0007669"/>
    <property type="project" value="UniProtKB-UniRule"/>
</dbReference>
<dbReference type="GO" id="GO:0008270">
    <property type="term" value="F:zinc ion binding"/>
    <property type="evidence" value="ECO:0007669"/>
    <property type="project" value="UniProtKB-KW"/>
</dbReference>
<dbReference type="GO" id="GO:0006310">
    <property type="term" value="P:DNA recombination"/>
    <property type="evidence" value="ECO:0007669"/>
    <property type="project" value="UniProtKB-UniRule"/>
</dbReference>
<dbReference type="GO" id="GO:0006281">
    <property type="term" value="P:DNA repair"/>
    <property type="evidence" value="ECO:0007669"/>
    <property type="project" value="UniProtKB-UniRule"/>
</dbReference>
<dbReference type="CDD" id="cd01025">
    <property type="entry name" value="TOPRIM_recR"/>
    <property type="match status" value="1"/>
</dbReference>
<dbReference type="Gene3D" id="3.30.60.80">
    <property type="match status" value="1"/>
</dbReference>
<dbReference type="Gene3D" id="3.40.1360.10">
    <property type="match status" value="1"/>
</dbReference>
<dbReference type="Gene3D" id="6.10.250.240">
    <property type="match status" value="1"/>
</dbReference>
<dbReference type="Gene3D" id="1.10.8.420">
    <property type="entry name" value="RecR Domain 1"/>
    <property type="match status" value="1"/>
</dbReference>
<dbReference type="HAMAP" id="MF_00017">
    <property type="entry name" value="RecR"/>
    <property type="match status" value="1"/>
</dbReference>
<dbReference type="InterPro" id="IPR000093">
    <property type="entry name" value="DNA_Rcmb_RecR"/>
</dbReference>
<dbReference type="InterPro" id="IPR023627">
    <property type="entry name" value="Rcmb_RecR"/>
</dbReference>
<dbReference type="InterPro" id="IPR015967">
    <property type="entry name" value="Rcmb_RecR_Znf"/>
</dbReference>
<dbReference type="InterPro" id="IPR006171">
    <property type="entry name" value="TOPRIM_dom"/>
</dbReference>
<dbReference type="InterPro" id="IPR034137">
    <property type="entry name" value="TOPRIM_RecR"/>
</dbReference>
<dbReference type="NCBIfam" id="TIGR00615">
    <property type="entry name" value="recR"/>
    <property type="match status" value="1"/>
</dbReference>
<dbReference type="PANTHER" id="PTHR30446">
    <property type="entry name" value="RECOMBINATION PROTEIN RECR"/>
    <property type="match status" value="1"/>
</dbReference>
<dbReference type="PANTHER" id="PTHR30446:SF0">
    <property type="entry name" value="RECOMBINATION PROTEIN RECR"/>
    <property type="match status" value="1"/>
</dbReference>
<dbReference type="Pfam" id="PF21175">
    <property type="entry name" value="RecR_C"/>
    <property type="match status" value="1"/>
</dbReference>
<dbReference type="Pfam" id="PF21176">
    <property type="entry name" value="RecR_HhH"/>
    <property type="match status" value="1"/>
</dbReference>
<dbReference type="Pfam" id="PF02132">
    <property type="entry name" value="RecR_ZnF"/>
    <property type="match status" value="1"/>
</dbReference>
<dbReference type="Pfam" id="PF13662">
    <property type="entry name" value="Toprim_4"/>
    <property type="match status" value="1"/>
</dbReference>
<dbReference type="SMART" id="SM00493">
    <property type="entry name" value="TOPRIM"/>
    <property type="match status" value="1"/>
</dbReference>
<dbReference type="SUPFAM" id="SSF111304">
    <property type="entry name" value="Recombination protein RecR"/>
    <property type="match status" value="1"/>
</dbReference>
<dbReference type="PROSITE" id="PS01300">
    <property type="entry name" value="RECR"/>
    <property type="match status" value="1"/>
</dbReference>
<dbReference type="PROSITE" id="PS50880">
    <property type="entry name" value="TOPRIM"/>
    <property type="match status" value="1"/>
</dbReference>
<accession>B1YGD0</accession>
<proteinExistence type="inferred from homology"/>